<evidence type="ECO:0000255" key="1">
    <source>
        <dbReference type="HAMAP-Rule" id="MF_00145"/>
    </source>
</evidence>
<dbReference type="EC" id="2.7.2.3" evidence="1"/>
<dbReference type="EMBL" id="CP000769">
    <property type="protein sequence ID" value="ABS26483.1"/>
    <property type="molecule type" value="Genomic_DNA"/>
</dbReference>
<dbReference type="RefSeq" id="WP_012097068.1">
    <property type="nucleotide sequence ID" value="NC_009675.1"/>
</dbReference>
<dbReference type="SMR" id="A7HCN7"/>
<dbReference type="STRING" id="404589.Anae109_2281"/>
<dbReference type="KEGG" id="afw:Anae109_2281"/>
<dbReference type="eggNOG" id="COG0126">
    <property type="taxonomic scope" value="Bacteria"/>
</dbReference>
<dbReference type="HOGENOM" id="CLU_025427_0_2_7"/>
<dbReference type="OrthoDB" id="9808460at2"/>
<dbReference type="UniPathway" id="UPA00109">
    <property type="reaction ID" value="UER00185"/>
</dbReference>
<dbReference type="Proteomes" id="UP000006382">
    <property type="component" value="Chromosome"/>
</dbReference>
<dbReference type="GO" id="GO:0005829">
    <property type="term" value="C:cytosol"/>
    <property type="evidence" value="ECO:0007669"/>
    <property type="project" value="TreeGrafter"/>
</dbReference>
<dbReference type="GO" id="GO:0043531">
    <property type="term" value="F:ADP binding"/>
    <property type="evidence" value="ECO:0007669"/>
    <property type="project" value="TreeGrafter"/>
</dbReference>
<dbReference type="GO" id="GO:0005524">
    <property type="term" value="F:ATP binding"/>
    <property type="evidence" value="ECO:0007669"/>
    <property type="project" value="UniProtKB-KW"/>
</dbReference>
<dbReference type="GO" id="GO:0004618">
    <property type="term" value="F:phosphoglycerate kinase activity"/>
    <property type="evidence" value="ECO:0007669"/>
    <property type="project" value="UniProtKB-UniRule"/>
</dbReference>
<dbReference type="GO" id="GO:0006094">
    <property type="term" value="P:gluconeogenesis"/>
    <property type="evidence" value="ECO:0007669"/>
    <property type="project" value="TreeGrafter"/>
</dbReference>
<dbReference type="GO" id="GO:0006096">
    <property type="term" value="P:glycolytic process"/>
    <property type="evidence" value="ECO:0007669"/>
    <property type="project" value="UniProtKB-UniRule"/>
</dbReference>
<dbReference type="CDD" id="cd00318">
    <property type="entry name" value="Phosphoglycerate_kinase"/>
    <property type="match status" value="1"/>
</dbReference>
<dbReference type="FunFam" id="3.40.50.1260:FF:000003">
    <property type="entry name" value="Phosphoglycerate kinase"/>
    <property type="match status" value="1"/>
</dbReference>
<dbReference type="FunFam" id="3.40.50.1260:FF:000006">
    <property type="entry name" value="Phosphoglycerate kinase"/>
    <property type="match status" value="1"/>
</dbReference>
<dbReference type="Gene3D" id="3.40.50.1260">
    <property type="entry name" value="Phosphoglycerate kinase, N-terminal domain"/>
    <property type="match status" value="2"/>
</dbReference>
<dbReference type="HAMAP" id="MF_00145">
    <property type="entry name" value="Phosphoglyc_kinase"/>
    <property type="match status" value="1"/>
</dbReference>
<dbReference type="InterPro" id="IPR001576">
    <property type="entry name" value="Phosphoglycerate_kinase"/>
</dbReference>
<dbReference type="InterPro" id="IPR015911">
    <property type="entry name" value="Phosphoglycerate_kinase_CS"/>
</dbReference>
<dbReference type="InterPro" id="IPR015824">
    <property type="entry name" value="Phosphoglycerate_kinase_N"/>
</dbReference>
<dbReference type="InterPro" id="IPR036043">
    <property type="entry name" value="Phosphoglycerate_kinase_sf"/>
</dbReference>
<dbReference type="PANTHER" id="PTHR11406">
    <property type="entry name" value="PHOSPHOGLYCERATE KINASE"/>
    <property type="match status" value="1"/>
</dbReference>
<dbReference type="PANTHER" id="PTHR11406:SF23">
    <property type="entry name" value="PHOSPHOGLYCERATE KINASE 1, CHLOROPLASTIC-RELATED"/>
    <property type="match status" value="1"/>
</dbReference>
<dbReference type="Pfam" id="PF00162">
    <property type="entry name" value="PGK"/>
    <property type="match status" value="1"/>
</dbReference>
<dbReference type="PIRSF" id="PIRSF000724">
    <property type="entry name" value="Pgk"/>
    <property type="match status" value="1"/>
</dbReference>
<dbReference type="PRINTS" id="PR00477">
    <property type="entry name" value="PHGLYCKINASE"/>
</dbReference>
<dbReference type="SUPFAM" id="SSF53748">
    <property type="entry name" value="Phosphoglycerate kinase"/>
    <property type="match status" value="1"/>
</dbReference>
<dbReference type="PROSITE" id="PS00111">
    <property type="entry name" value="PGLYCERATE_KINASE"/>
    <property type="match status" value="1"/>
</dbReference>
<keyword id="KW-0067">ATP-binding</keyword>
<keyword id="KW-0963">Cytoplasm</keyword>
<keyword id="KW-0324">Glycolysis</keyword>
<keyword id="KW-0418">Kinase</keyword>
<keyword id="KW-0547">Nucleotide-binding</keyword>
<keyword id="KW-1185">Reference proteome</keyword>
<keyword id="KW-0808">Transferase</keyword>
<feature type="chain" id="PRO_1000057958" description="Phosphoglycerate kinase">
    <location>
        <begin position="1"/>
        <end position="396"/>
    </location>
</feature>
<feature type="binding site" evidence="1">
    <location>
        <begin position="21"/>
        <end position="23"/>
    </location>
    <ligand>
        <name>substrate</name>
    </ligand>
</feature>
<feature type="binding site" evidence="1">
    <location>
        <position position="37"/>
    </location>
    <ligand>
        <name>substrate</name>
    </ligand>
</feature>
<feature type="binding site" evidence="1">
    <location>
        <begin position="60"/>
        <end position="63"/>
    </location>
    <ligand>
        <name>substrate</name>
    </ligand>
</feature>
<feature type="binding site" evidence="1">
    <location>
        <position position="121"/>
    </location>
    <ligand>
        <name>substrate</name>
    </ligand>
</feature>
<feature type="binding site" evidence="1">
    <location>
        <position position="154"/>
    </location>
    <ligand>
        <name>substrate</name>
    </ligand>
</feature>
<feature type="binding site" evidence="1">
    <location>
        <position position="205"/>
    </location>
    <ligand>
        <name>ATP</name>
        <dbReference type="ChEBI" id="CHEBI:30616"/>
    </ligand>
</feature>
<feature type="binding site" evidence="1">
    <location>
        <position position="296"/>
    </location>
    <ligand>
        <name>ATP</name>
        <dbReference type="ChEBI" id="CHEBI:30616"/>
    </ligand>
</feature>
<feature type="binding site" evidence="1">
    <location>
        <position position="327"/>
    </location>
    <ligand>
        <name>ATP</name>
        <dbReference type="ChEBI" id="CHEBI:30616"/>
    </ligand>
</feature>
<feature type="binding site" evidence="1">
    <location>
        <begin position="353"/>
        <end position="356"/>
    </location>
    <ligand>
        <name>ATP</name>
        <dbReference type="ChEBI" id="CHEBI:30616"/>
    </ligand>
</feature>
<proteinExistence type="inferred from homology"/>
<organism>
    <name type="scientific">Anaeromyxobacter sp. (strain Fw109-5)</name>
    <dbReference type="NCBI Taxonomy" id="404589"/>
    <lineage>
        <taxon>Bacteria</taxon>
        <taxon>Pseudomonadati</taxon>
        <taxon>Myxococcota</taxon>
        <taxon>Myxococcia</taxon>
        <taxon>Myxococcales</taxon>
        <taxon>Cystobacterineae</taxon>
        <taxon>Anaeromyxobacteraceae</taxon>
        <taxon>Anaeromyxobacter</taxon>
    </lineage>
</organism>
<sequence length="396" mass="42732">MALKTIDALDLAGKRVFIRVDFNVPLDEQRRVTDDARIRAALPTIKHAIQARAKVILGSHLGRPKGKPDDREKFSLEPAAQRLSELLKQDVILADDCIGDGVKKLVRDLKEGQVLLLENLRFHPQEEKNDEGFARELATLCDVWVNDAFGTAHRAHASTAGMAAFVKEKAAGFLIQKEVEYLGKALGSPERPFVALIGGAKVSDKIKVLENLIAKADAICIGGAMAYTFLKAQGVAVGKSLVEEDKLELARQILERAQARKVDLLLPVDHVCGAEPKDTAERVVVNDRAIPDGLMGLDIGPKTLDRYRQRIVDAKTVFWNGPMGLFEQKPWAEGTFGVAQAMAQSPAVTVVGGGDSAAAVEEAGLVSKMKHVSTGGGASLEFIEGRVLPGIQVLEG</sequence>
<name>PGK_ANADF</name>
<comment type="catalytic activity">
    <reaction evidence="1">
        <text>(2R)-3-phosphoglycerate + ATP = (2R)-3-phospho-glyceroyl phosphate + ADP</text>
        <dbReference type="Rhea" id="RHEA:14801"/>
        <dbReference type="ChEBI" id="CHEBI:30616"/>
        <dbReference type="ChEBI" id="CHEBI:57604"/>
        <dbReference type="ChEBI" id="CHEBI:58272"/>
        <dbReference type="ChEBI" id="CHEBI:456216"/>
        <dbReference type="EC" id="2.7.2.3"/>
    </reaction>
</comment>
<comment type="pathway">
    <text evidence="1">Carbohydrate degradation; glycolysis; pyruvate from D-glyceraldehyde 3-phosphate: step 2/5.</text>
</comment>
<comment type="subunit">
    <text evidence="1">Monomer.</text>
</comment>
<comment type="subcellular location">
    <subcellularLocation>
        <location evidence="1">Cytoplasm</location>
    </subcellularLocation>
</comment>
<comment type="similarity">
    <text evidence="1">Belongs to the phosphoglycerate kinase family.</text>
</comment>
<reference key="1">
    <citation type="journal article" date="2015" name="Genome Announc.">
        <title>Complete genome sequence of Anaeromyxobacter sp. Fw109-5, an anaerobic, metal-reducing bacterium isolated from a contaminated subsurface environment.</title>
        <authorList>
            <person name="Hwang C."/>
            <person name="Copeland A."/>
            <person name="Lucas S."/>
            <person name="Lapidus A."/>
            <person name="Barry K."/>
            <person name="Glavina Del Rio T."/>
            <person name="Dalin E."/>
            <person name="Tice H."/>
            <person name="Pitluck S."/>
            <person name="Sims D."/>
            <person name="Brettin T."/>
            <person name="Bruce D.C."/>
            <person name="Detter J.C."/>
            <person name="Han C.S."/>
            <person name="Schmutz J."/>
            <person name="Larimer F.W."/>
            <person name="Land M.L."/>
            <person name="Hauser L.J."/>
            <person name="Kyrpides N."/>
            <person name="Lykidis A."/>
            <person name="Richardson P."/>
            <person name="Belieav A."/>
            <person name="Sanford R.A."/>
            <person name="Loeffler F.E."/>
            <person name="Fields M.W."/>
        </authorList>
    </citation>
    <scope>NUCLEOTIDE SEQUENCE [LARGE SCALE GENOMIC DNA]</scope>
    <source>
        <strain>Fw109-5</strain>
    </source>
</reference>
<gene>
    <name evidence="1" type="primary">pgk</name>
    <name type="ordered locus">Anae109_2281</name>
</gene>
<protein>
    <recommendedName>
        <fullName evidence="1">Phosphoglycerate kinase</fullName>
        <ecNumber evidence="1">2.7.2.3</ecNumber>
    </recommendedName>
</protein>
<accession>A7HCN7</accession>